<accession>B1IQC7</accession>
<name>RSXA_ECOLC</name>
<sequence length="193" mass="20898">MTDYLLLFVGTVLVNNFVLVKFLGLCPFMGVSKKLETAMGMGLATTFVMTLASICAWLIDTWILIPLNLIYLRTLAFILVIAVVVQFTEMVVRKTSPVLYRLLGIFLPLITTNCAVLGVALLNINLGHNFLQSALYGFSAAVGFSLVMVLFAAIRERLAVADVPAPFRGNAIALITAGLMSLAFMGFSGLVKL</sequence>
<gene>
    <name evidence="1" type="primary">rsxA</name>
    <name type="ordered locus">EcolC_2002</name>
</gene>
<feature type="chain" id="PRO_1000081131" description="Ion-translocating oxidoreductase complex subunit A">
    <location>
        <begin position="1"/>
        <end position="193"/>
    </location>
</feature>
<feature type="transmembrane region" description="Helical" evidence="1">
    <location>
        <begin position="5"/>
        <end position="25"/>
    </location>
</feature>
<feature type="transmembrane region" description="Helical" evidence="1">
    <location>
        <begin position="39"/>
        <end position="59"/>
    </location>
</feature>
<feature type="transmembrane region" description="Helical" evidence="1">
    <location>
        <begin position="63"/>
        <end position="83"/>
    </location>
</feature>
<feature type="transmembrane region" description="Helical" evidence="1">
    <location>
        <begin position="102"/>
        <end position="122"/>
    </location>
</feature>
<feature type="transmembrane region" description="Helical" evidence="1">
    <location>
        <begin position="134"/>
        <end position="154"/>
    </location>
</feature>
<feature type="transmembrane region" description="Helical" evidence="1">
    <location>
        <begin position="171"/>
        <end position="191"/>
    </location>
</feature>
<reference key="1">
    <citation type="submission" date="2008-02" db="EMBL/GenBank/DDBJ databases">
        <title>Complete sequence of Escherichia coli C str. ATCC 8739.</title>
        <authorList>
            <person name="Copeland A."/>
            <person name="Lucas S."/>
            <person name="Lapidus A."/>
            <person name="Glavina del Rio T."/>
            <person name="Dalin E."/>
            <person name="Tice H."/>
            <person name="Bruce D."/>
            <person name="Goodwin L."/>
            <person name="Pitluck S."/>
            <person name="Kiss H."/>
            <person name="Brettin T."/>
            <person name="Detter J.C."/>
            <person name="Han C."/>
            <person name="Kuske C.R."/>
            <person name="Schmutz J."/>
            <person name="Larimer F."/>
            <person name="Land M."/>
            <person name="Hauser L."/>
            <person name="Kyrpides N."/>
            <person name="Mikhailova N."/>
            <person name="Ingram L."/>
            <person name="Richardson P."/>
        </authorList>
    </citation>
    <scope>NUCLEOTIDE SEQUENCE [LARGE SCALE GENOMIC DNA]</scope>
    <source>
        <strain>ATCC 8739 / DSM 1576 / NBRC 3972 / NCIMB 8545 / WDCM 00012 / Crooks</strain>
    </source>
</reference>
<evidence type="ECO:0000255" key="1">
    <source>
        <dbReference type="HAMAP-Rule" id="MF_00459"/>
    </source>
</evidence>
<proteinExistence type="inferred from homology"/>
<dbReference type="EC" id="7.-.-.-" evidence="1"/>
<dbReference type="EMBL" id="CP000946">
    <property type="protein sequence ID" value="ACA77648.1"/>
    <property type="molecule type" value="Genomic_DNA"/>
</dbReference>
<dbReference type="RefSeq" id="WP_000133193.1">
    <property type="nucleotide sequence ID" value="NZ_MTFT01000006.1"/>
</dbReference>
<dbReference type="SMR" id="B1IQC7"/>
<dbReference type="GeneID" id="89516393"/>
<dbReference type="KEGG" id="ecl:EcolC_2002"/>
<dbReference type="HOGENOM" id="CLU_095255_1_0_6"/>
<dbReference type="GO" id="GO:0005886">
    <property type="term" value="C:plasma membrane"/>
    <property type="evidence" value="ECO:0007669"/>
    <property type="project" value="UniProtKB-SubCell"/>
</dbReference>
<dbReference type="GO" id="GO:0022900">
    <property type="term" value="P:electron transport chain"/>
    <property type="evidence" value="ECO:0007669"/>
    <property type="project" value="UniProtKB-UniRule"/>
</dbReference>
<dbReference type="HAMAP" id="MF_00459">
    <property type="entry name" value="RsxA_RnfA"/>
    <property type="match status" value="1"/>
</dbReference>
<dbReference type="InterPro" id="IPR011293">
    <property type="entry name" value="Ion_transpt_RnfA/RsxA"/>
</dbReference>
<dbReference type="InterPro" id="IPR003667">
    <property type="entry name" value="NqrDE/RnfAE"/>
</dbReference>
<dbReference type="InterPro" id="IPR050133">
    <property type="entry name" value="NqrDE/RnfAE_oxidrdctase"/>
</dbReference>
<dbReference type="NCBIfam" id="NF003481">
    <property type="entry name" value="PRK05151.1"/>
    <property type="match status" value="1"/>
</dbReference>
<dbReference type="NCBIfam" id="TIGR01943">
    <property type="entry name" value="rnfA"/>
    <property type="match status" value="1"/>
</dbReference>
<dbReference type="PANTHER" id="PTHR30335">
    <property type="entry name" value="INTEGRAL MEMBRANE PROTEIN OF SOXR-REDUCING COMPLEX"/>
    <property type="match status" value="1"/>
</dbReference>
<dbReference type="PANTHER" id="PTHR30335:SF0">
    <property type="entry name" value="ION-TRANSLOCATING OXIDOREDUCTASE COMPLEX SUBUNIT A"/>
    <property type="match status" value="1"/>
</dbReference>
<dbReference type="Pfam" id="PF02508">
    <property type="entry name" value="Rnf-Nqr"/>
    <property type="match status" value="1"/>
</dbReference>
<dbReference type="PIRSF" id="PIRSF006102">
    <property type="entry name" value="NQR_DE"/>
    <property type="match status" value="1"/>
</dbReference>
<comment type="function">
    <text evidence="1">Part of a membrane-bound complex that couples electron transfer with translocation of ions across the membrane. Required to maintain the reduced state of SoxR.</text>
</comment>
<comment type="subunit">
    <text evidence="1">The complex is composed of six subunits: RsxA, RsxB, RsxC, RsxD, RsxE and RsxG.</text>
</comment>
<comment type="subcellular location">
    <subcellularLocation>
        <location evidence="1">Cell inner membrane</location>
        <topology evidence="1">Multi-pass membrane protein</topology>
    </subcellularLocation>
</comment>
<comment type="similarity">
    <text evidence="1">Belongs to the NqrDE/RnfAE family.</text>
</comment>
<protein>
    <recommendedName>
        <fullName evidence="1">Ion-translocating oxidoreductase complex subunit A</fullName>
        <ecNumber evidence="1">7.-.-.-</ecNumber>
    </recommendedName>
    <alternativeName>
        <fullName evidence="1">Rsx electron transport complex subunit A</fullName>
    </alternativeName>
</protein>
<organism>
    <name type="scientific">Escherichia coli (strain ATCC 8739 / DSM 1576 / NBRC 3972 / NCIMB 8545 / WDCM 00012 / Crooks)</name>
    <dbReference type="NCBI Taxonomy" id="481805"/>
    <lineage>
        <taxon>Bacteria</taxon>
        <taxon>Pseudomonadati</taxon>
        <taxon>Pseudomonadota</taxon>
        <taxon>Gammaproteobacteria</taxon>
        <taxon>Enterobacterales</taxon>
        <taxon>Enterobacteriaceae</taxon>
        <taxon>Escherichia</taxon>
    </lineage>
</organism>
<keyword id="KW-0997">Cell inner membrane</keyword>
<keyword id="KW-1003">Cell membrane</keyword>
<keyword id="KW-0249">Electron transport</keyword>
<keyword id="KW-0472">Membrane</keyword>
<keyword id="KW-1278">Translocase</keyword>
<keyword id="KW-0812">Transmembrane</keyword>
<keyword id="KW-1133">Transmembrane helix</keyword>
<keyword id="KW-0813">Transport</keyword>